<dbReference type="EMBL" id="EF192162">
    <property type="protein sequence ID" value="ABP35565.1"/>
    <property type="molecule type" value="mRNA"/>
</dbReference>
<dbReference type="RefSeq" id="NP_001091055.1">
    <property type="nucleotide sequence ID" value="NM_001097586.1"/>
</dbReference>
<dbReference type="FunCoup" id="A4ZNR5">
    <property type="interactions" value="336"/>
</dbReference>
<dbReference type="STRING" id="7955.ENSDARP00000018883"/>
<dbReference type="PaxDb" id="7955-ENSDARP00000018883"/>
<dbReference type="GeneID" id="794221"/>
<dbReference type="KEGG" id="dre:794221"/>
<dbReference type="AGR" id="ZFIN:ZDB-GENE-081013-6"/>
<dbReference type="CTD" id="794221"/>
<dbReference type="ZFIN" id="ZDB-GENE-081013-6">
    <property type="gene designation" value="nkd2b"/>
</dbReference>
<dbReference type="eggNOG" id="ENOG502QWMF">
    <property type="taxonomic scope" value="Eukaryota"/>
</dbReference>
<dbReference type="InParanoid" id="A4ZNR5"/>
<dbReference type="OrthoDB" id="5953812at2759"/>
<dbReference type="PhylomeDB" id="A4ZNR5"/>
<dbReference type="PRO" id="PR:A4ZNR5"/>
<dbReference type="Proteomes" id="UP000000437">
    <property type="component" value="Chromosome 16"/>
</dbReference>
<dbReference type="GO" id="GO:0005737">
    <property type="term" value="C:cytoplasm"/>
    <property type="evidence" value="ECO:0000318"/>
    <property type="project" value="GO_Central"/>
</dbReference>
<dbReference type="GO" id="GO:0005886">
    <property type="term" value="C:plasma membrane"/>
    <property type="evidence" value="ECO:0007669"/>
    <property type="project" value="UniProtKB-SubCell"/>
</dbReference>
<dbReference type="GO" id="GO:0005509">
    <property type="term" value="F:calcium ion binding"/>
    <property type="evidence" value="ECO:0007669"/>
    <property type="project" value="InterPro"/>
</dbReference>
<dbReference type="GO" id="GO:0090090">
    <property type="term" value="P:negative regulation of canonical Wnt signaling pathway"/>
    <property type="evidence" value="ECO:0007669"/>
    <property type="project" value="UniProtKB-ARBA"/>
</dbReference>
<dbReference type="GO" id="GO:0030178">
    <property type="term" value="P:negative regulation of Wnt signaling pathway"/>
    <property type="evidence" value="ECO:0000318"/>
    <property type="project" value="GO_Central"/>
</dbReference>
<dbReference type="GO" id="GO:0016055">
    <property type="term" value="P:Wnt signaling pathway"/>
    <property type="evidence" value="ECO:0007669"/>
    <property type="project" value="UniProtKB-KW"/>
</dbReference>
<dbReference type="FunFam" id="1.10.238.10:FF:000579">
    <property type="entry name" value="NKD2, WNT signaling pathway inhibitor"/>
    <property type="match status" value="1"/>
</dbReference>
<dbReference type="Gene3D" id="1.10.238.10">
    <property type="entry name" value="EF-hand"/>
    <property type="match status" value="1"/>
</dbReference>
<dbReference type="InterPro" id="IPR011992">
    <property type="entry name" value="EF-hand-dom_pair"/>
</dbReference>
<dbReference type="InterPro" id="IPR018247">
    <property type="entry name" value="EF_Hand_1_Ca_BS"/>
</dbReference>
<dbReference type="InterPro" id="IPR002048">
    <property type="entry name" value="EF_hand_dom"/>
</dbReference>
<dbReference type="InterPro" id="IPR040140">
    <property type="entry name" value="Nkd-like"/>
</dbReference>
<dbReference type="PANTHER" id="PTHR22611">
    <property type="entry name" value="PROTEIN NAKED CUTICLE"/>
    <property type="match status" value="1"/>
</dbReference>
<dbReference type="PANTHER" id="PTHR22611:SF1">
    <property type="entry name" value="PROTEIN NAKED CUTICLE HOMOLOG 2"/>
    <property type="match status" value="1"/>
</dbReference>
<dbReference type="SUPFAM" id="SSF47473">
    <property type="entry name" value="EF-hand"/>
    <property type="match status" value="1"/>
</dbReference>
<dbReference type="PROSITE" id="PS00018">
    <property type="entry name" value="EF_HAND_1"/>
    <property type="match status" value="1"/>
</dbReference>
<dbReference type="PROSITE" id="PS50222">
    <property type="entry name" value="EF_HAND_2"/>
    <property type="match status" value="1"/>
</dbReference>
<organism>
    <name type="scientific">Danio rerio</name>
    <name type="common">Zebrafish</name>
    <name type="synonym">Brachydanio rerio</name>
    <dbReference type="NCBI Taxonomy" id="7955"/>
    <lineage>
        <taxon>Eukaryota</taxon>
        <taxon>Metazoa</taxon>
        <taxon>Chordata</taxon>
        <taxon>Craniata</taxon>
        <taxon>Vertebrata</taxon>
        <taxon>Euteleostomi</taxon>
        <taxon>Actinopterygii</taxon>
        <taxon>Neopterygii</taxon>
        <taxon>Teleostei</taxon>
        <taxon>Ostariophysi</taxon>
        <taxon>Cypriniformes</taxon>
        <taxon>Danionidae</taxon>
        <taxon>Danioninae</taxon>
        <taxon>Danio</taxon>
    </lineage>
</organism>
<sequence>MGKLHSKHACKRRENPEGDSFVVNGFIAKRAAEEDERYGNNLKDYKNEELKDGRLTLLHCPLQVVLPPEKAEGCESFLQYLSPDDGERDAQKVKKRISLQDLECNVSLAEDNRQEWVFTLYDFDNSGKVTKEDMSSLMHTIYDVVDASVKHSCNTKRRSLRVKLSVTPEPAARRRDATHTERETSHLSQVEPVRSEEHRSADRRQSTHIRGQTEAHEGNHYCVDENTERRNHYLDLAGIENYTSRFDSSSPDADQDPPSRSSHSQSRPHSQEPETHVYQRRSQLIEPCVAPDPRLRTGPQLIRSRSPKGSSRFPGVIPNVTKTSKCHGHHQPIPTGQDVYHLTQQNHTHAHTPSGLQHSHSRRIRSRAREQQALTPVKNTNATALVQRHEHHHHHEHHHHHHYHHYHQT</sequence>
<accession>A4ZNR5</accession>
<gene>
    <name type="primary">nkd2l</name>
    <name type="synonym">nkd2b</name>
</gene>
<reference key="1">
    <citation type="journal article" date="2007" name="Dev. Biol.">
        <title>Zebrafish Naked1 and Naked2 antagonize both canonical and non-canonical Wnt signaling.</title>
        <authorList>
            <person name="Van Raay T.J."/>
            <person name="Coffey R.J."/>
            <person name="Solnica-Krezel L."/>
        </authorList>
    </citation>
    <scope>NUCLEOTIDE SEQUENCE [MRNA]</scope>
</reference>
<evidence type="ECO:0000250" key="1"/>
<evidence type="ECO:0000250" key="2">
    <source>
        <dbReference type="UniProtKB" id="Q969F2"/>
    </source>
</evidence>
<evidence type="ECO:0000255" key="3"/>
<evidence type="ECO:0000255" key="4">
    <source>
        <dbReference type="PROSITE-ProRule" id="PRU00448"/>
    </source>
</evidence>
<evidence type="ECO:0000256" key="5">
    <source>
        <dbReference type="SAM" id="MobiDB-lite"/>
    </source>
</evidence>
<evidence type="ECO:0000305" key="6"/>
<name>NKD2L_DANRE</name>
<keyword id="KW-0106">Calcium</keyword>
<keyword id="KW-1003">Cell membrane</keyword>
<keyword id="KW-0963">Cytoplasm</keyword>
<keyword id="KW-0449">Lipoprotein</keyword>
<keyword id="KW-0472">Membrane</keyword>
<keyword id="KW-0479">Metal-binding</keyword>
<keyword id="KW-0519">Myristate</keyword>
<keyword id="KW-1185">Reference proteome</keyword>
<keyword id="KW-0879">Wnt signaling pathway</keyword>
<proteinExistence type="evidence at transcript level"/>
<protein>
    <recommendedName>
        <fullName>Protein naked cuticle homolog 2-like</fullName>
        <shortName>Naked-2-like</shortName>
    </recommendedName>
    <alternativeName>
        <fullName>Protein naked cuticle homolog 2-B</fullName>
        <shortName>Naked-2B</shortName>
    </alternativeName>
</protein>
<comment type="function">
    <text evidence="1">Cell autonomous antagonist of both the canonical and non-canonical Wnt signaling pathways.</text>
</comment>
<comment type="subcellular location">
    <subcellularLocation>
        <location evidence="2">Cell membrane</location>
    </subcellularLocation>
    <subcellularLocation>
        <location evidence="2">Cytoplasm</location>
    </subcellularLocation>
</comment>
<comment type="similarity">
    <text evidence="6">Belongs to the NKD family.</text>
</comment>
<feature type="initiator methionine" description="Removed" evidence="3">
    <location>
        <position position="1"/>
    </location>
</feature>
<feature type="chain" id="PRO_0000301996" description="Protein naked cuticle homolog 2-like">
    <location>
        <begin position="2"/>
        <end position="409"/>
    </location>
</feature>
<feature type="domain" description="EF-hand" evidence="4">
    <location>
        <begin position="109"/>
        <end position="144"/>
    </location>
</feature>
<feature type="region of interest" description="Disordered" evidence="5">
    <location>
        <begin position="166"/>
        <end position="224"/>
    </location>
</feature>
<feature type="region of interest" description="Disordered" evidence="5">
    <location>
        <begin position="243"/>
        <end position="315"/>
    </location>
</feature>
<feature type="region of interest" description="Disordered" evidence="5">
    <location>
        <begin position="346"/>
        <end position="367"/>
    </location>
</feature>
<feature type="region of interest" description="Disordered" evidence="5">
    <location>
        <begin position="388"/>
        <end position="409"/>
    </location>
</feature>
<feature type="compositionally biased region" description="Basic and acidic residues" evidence="5">
    <location>
        <begin position="171"/>
        <end position="185"/>
    </location>
</feature>
<feature type="compositionally biased region" description="Basic and acidic residues" evidence="5">
    <location>
        <begin position="193"/>
        <end position="224"/>
    </location>
</feature>
<feature type="compositionally biased region" description="Low complexity" evidence="5">
    <location>
        <begin position="247"/>
        <end position="268"/>
    </location>
</feature>
<feature type="compositionally biased region" description="Basic residues" evidence="5">
    <location>
        <begin position="389"/>
        <end position="409"/>
    </location>
</feature>
<feature type="binding site" evidence="4">
    <location>
        <position position="122"/>
    </location>
    <ligand>
        <name>Ca(2+)</name>
        <dbReference type="ChEBI" id="CHEBI:29108"/>
    </ligand>
</feature>
<feature type="binding site" evidence="4">
    <location>
        <position position="124"/>
    </location>
    <ligand>
        <name>Ca(2+)</name>
        <dbReference type="ChEBI" id="CHEBI:29108"/>
    </ligand>
</feature>
<feature type="binding site" evidence="4">
    <location>
        <position position="126"/>
    </location>
    <ligand>
        <name>Ca(2+)</name>
        <dbReference type="ChEBI" id="CHEBI:29108"/>
    </ligand>
</feature>
<feature type="binding site" evidence="4">
    <location>
        <position position="128"/>
    </location>
    <ligand>
        <name>Ca(2+)</name>
        <dbReference type="ChEBI" id="CHEBI:29108"/>
    </ligand>
</feature>
<feature type="binding site" evidence="4">
    <location>
        <position position="133"/>
    </location>
    <ligand>
        <name>Ca(2+)</name>
        <dbReference type="ChEBI" id="CHEBI:29108"/>
    </ligand>
</feature>
<feature type="lipid moiety-binding region" description="N-myristoyl glycine" evidence="3">
    <location>
        <position position="2"/>
    </location>
</feature>